<comment type="function">
    <text evidence="1">Required for maturation of 30S ribosomal subunits.</text>
</comment>
<comment type="subcellular location">
    <subcellularLocation>
        <location evidence="1">Cytoplasm</location>
    </subcellularLocation>
</comment>
<comment type="similarity">
    <text evidence="1">Belongs to the RimP family.</text>
</comment>
<protein>
    <recommendedName>
        <fullName evidence="1">Ribosome maturation factor RimP</fullName>
    </recommendedName>
</protein>
<keyword id="KW-0963">Cytoplasm</keyword>
<keyword id="KW-0690">Ribosome biogenesis</keyword>
<evidence type="ECO:0000255" key="1">
    <source>
        <dbReference type="HAMAP-Rule" id="MF_01077"/>
    </source>
</evidence>
<sequence>MQTIEQQITNVIEKSLTDMGFELVLIKFKGVNHKVVEILIDSLNGEKISVADCTKASSTISAILDVEDLIEDAYSLEVASSGLERPLVKFENYNRFLGREVKVKLKELLNGKTRYQGKIIKAENNKVYLKCEAQEVLIDYDLIKNANLVLTEEVLKKLLGSVKVSN</sequence>
<accession>A8GNW3</accession>
<proteinExistence type="inferred from homology"/>
<dbReference type="EMBL" id="CP000847">
    <property type="protein sequence ID" value="ABV75088.1"/>
    <property type="molecule type" value="Genomic_DNA"/>
</dbReference>
<dbReference type="RefSeq" id="WP_012149719.1">
    <property type="nucleotide sequence ID" value="NC_009881.1"/>
</dbReference>
<dbReference type="SMR" id="A8GNW3"/>
<dbReference type="STRING" id="293614.A1C_04075"/>
<dbReference type="KEGG" id="rak:A1C_04075"/>
<dbReference type="eggNOG" id="COG0779">
    <property type="taxonomic scope" value="Bacteria"/>
</dbReference>
<dbReference type="HOGENOM" id="CLU_070525_0_2_5"/>
<dbReference type="Proteomes" id="UP000006830">
    <property type="component" value="Chromosome"/>
</dbReference>
<dbReference type="GO" id="GO:0005829">
    <property type="term" value="C:cytosol"/>
    <property type="evidence" value="ECO:0007669"/>
    <property type="project" value="TreeGrafter"/>
</dbReference>
<dbReference type="GO" id="GO:0000028">
    <property type="term" value="P:ribosomal small subunit assembly"/>
    <property type="evidence" value="ECO:0007669"/>
    <property type="project" value="TreeGrafter"/>
</dbReference>
<dbReference type="GO" id="GO:0006412">
    <property type="term" value="P:translation"/>
    <property type="evidence" value="ECO:0007669"/>
    <property type="project" value="TreeGrafter"/>
</dbReference>
<dbReference type="CDD" id="cd01734">
    <property type="entry name" value="YlxS_C"/>
    <property type="match status" value="1"/>
</dbReference>
<dbReference type="Gene3D" id="2.30.30.180">
    <property type="entry name" value="Ribosome maturation factor RimP, C-terminal domain"/>
    <property type="match status" value="1"/>
</dbReference>
<dbReference type="Gene3D" id="3.30.300.70">
    <property type="entry name" value="RimP-like superfamily, N-terminal"/>
    <property type="match status" value="1"/>
</dbReference>
<dbReference type="HAMAP" id="MF_01077">
    <property type="entry name" value="RimP"/>
    <property type="match status" value="1"/>
</dbReference>
<dbReference type="InterPro" id="IPR003728">
    <property type="entry name" value="Ribosome_maturation_RimP"/>
</dbReference>
<dbReference type="InterPro" id="IPR028998">
    <property type="entry name" value="RimP_C"/>
</dbReference>
<dbReference type="InterPro" id="IPR036847">
    <property type="entry name" value="RimP_C_sf"/>
</dbReference>
<dbReference type="InterPro" id="IPR028989">
    <property type="entry name" value="RimP_N"/>
</dbReference>
<dbReference type="InterPro" id="IPR035956">
    <property type="entry name" value="RimP_N_sf"/>
</dbReference>
<dbReference type="NCBIfam" id="NF000937">
    <property type="entry name" value="PRK00092.4-3"/>
    <property type="match status" value="1"/>
</dbReference>
<dbReference type="PANTHER" id="PTHR33867">
    <property type="entry name" value="RIBOSOME MATURATION FACTOR RIMP"/>
    <property type="match status" value="1"/>
</dbReference>
<dbReference type="PANTHER" id="PTHR33867:SF1">
    <property type="entry name" value="RIBOSOME MATURATION FACTOR RIMP"/>
    <property type="match status" value="1"/>
</dbReference>
<dbReference type="Pfam" id="PF17384">
    <property type="entry name" value="DUF150_C"/>
    <property type="match status" value="1"/>
</dbReference>
<dbReference type="Pfam" id="PF02576">
    <property type="entry name" value="RimP_N"/>
    <property type="match status" value="1"/>
</dbReference>
<dbReference type="SUPFAM" id="SSF74942">
    <property type="entry name" value="YhbC-like, C-terminal domain"/>
    <property type="match status" value="1"/>
</dbReference>
<dbReference type="SUPFAM" id="SSF75420">
    <property type="entry name" value="YhbC-like, N-terminal domain"/>
    <property type="match status" value="1"/>
</dbReference>
<gene>
    <name evidence="1" type="primary">rimP</name>
    <name type="ordered locus">A1C_04075</name>
</gene>
<reference key="1">
    <citation type="submission" date="2007-09" db="EMBL/GenBank/DDBJ databases">
        <title>Complete genome sequence of Rickettsia akari.</title>
        <authorList>
            <person name="Madan A."/>
            <person name="Fahey J."/>
            <person name="Helton E."/>
            <person name="Ketteman M."/>
            <person name="Madan A."/>
            <person name="Rodrigues S."/>
            <person name="Sanchez A."/>
            <person name="Whiting M."/>
            <person name="Dasch G."/>
            <person name="Eremeeva M."/>
        </authorList>
    </citation>
    <scope>NUCLEOTIDE SEQUENCE [LARGE SCALE GENOMIC DNA]</scope>
    <source>
        <strain>Hartford</strain>
    </source>
</reference>
<organism>
    <name type="scientific">Rickettsia akari (strain Hartford)</name>
    <dbReference type="NCBI Taxonomy" id="293614"/>
    <lineage>
        <taxon>Bacteria</taxon>
        <taxon>Pseudomonadati</taxon>
        <taxon>Pseudomonadota</taxon>
        <taxon>Alphaproteobacteria</taxon>
        <taxon>Rickettsiales</taxon>
        <taxon>Rickettsiaceae</taxon>
        <taxon>Rickettsieae</taxon>
        <taxon>Rickettsia</taxon>
        <taxon>spotted fever group</taxon>
    </lineage>
</organism>
<feature type="chain" id="PRO_1000064759" description="Ribosome maturation factor RimP">
    <location>
        <begin position="1"/>
        <end position="166"/>
    </location>
</feature>
<name>RIMP_RICAH</name>